<gene>
    <name evidence="1" type="primary">surE</name>
    <name type="ordered locus">NATL1_16901</name>
</gene>
<feature type="chain" id="PRO_1000007762" description="5'-nucleotidase SurE">
    <location>
        <begin position="1"/>
        <end position="262"/>
    </location>
</feature>
<feature type="binding site" evidence="1">
    <location>
        <position position="11"/>
    </location>
    <ligand>
        <name>a divalent metal cation</name>
        <dbReference type="ChEBI" id="CHEBI:60240"/>
    </ligand>
</feature>
<feature type="binding site" evidence="1">
    <location>
        <position position="12"/>
    </location>
    <ligand>
        <name>a divalent metal cation</name>
        <dbReference type="ChEBI" id="CHEBI:60240"/>
    </ligand>
</feature>
<feature type="binding site" evidence="1">
    <location>
        <position position="43"/>
    </location>
    <ligand>
        <name>a divalent metal cation</name>
        <dbReference type="ChEBI" id="CHEBI:60240"/>
    </ligand>
</feature>
<feature type="binding site" evidence="1">
    <location>
        <position position="101"/>
    </location>
    <ligand>
        <name>a divalent metal cation</name>
        <dbReference type="ChEBI" id="CHEBI:60240"/>
    </ligand>
</feature>
<evidence type="ECO:0000255" key="1">
    <source>
        <dbReference type="HAMAP-Rule" id="MF_00060"/>
    </source>
</evidence>
<comment type="function">
    <text evidence="1">Nucleotidase that shows phosphatase activity on nucleoside 5'-monophosphates.</text>
</comment>
<comment type="catalytic activity">
    <reaction evidence="1">
        <text>a ribonucleoside 5'-phosphate + H2O = a ribonucleoside + phosphate</text>
        <dbReference type="Rhea" id="RHEA:12484"/>
        <dbReference type="ChEBI" id="CHEBI:15377"/>
        <dbReference type="ChEBI" id="CHEBI:18254"/>
        <dbReference type="ChEBI" id="CHEBI:43474"/>
        <dbReference type="ChEBI" id="CHEBI:58043"/>
        <dbReference type="EC" id="3.1.3.5"/>
    </reaction>
</comment>
<comment type="cofactor">
    <cofactor evidence="1">
        <name>a divalent metal cation</name>
        <dbReference type="ChEBI" id="CHEBI:60240"/>
    </cofactor>
    <text evidence="1">Binds 1 divalent metal cation per subunit.</text>
</comment>
<comment type="subcellular location">
    <subcellularLocation>
        <location evidence="1">Cytoplasm</location>
    </subcellularLocation>
</comment>
<comment type="similarity">
    <text evidence="1">Belongs to the SurE nucleotidase family.</text>
</comment>
<protein>
    <recommendedName>
        <fullName evidence="1">5'-nucleotidase SurE</fullName>
        <ecNumber evidence="1">3.1.3.5</ecNumber>
    </recommendedName>
    <alternativeName>
        <fullName evidence="1">Nucleoside 5'-monophosphate phosphohydrolase</fullName>
    </alternativeName>
</protein>
<sequence>MKPLKILISNDDGVFAEGIRTLATSAASRGHKVTVVCPDQERSATGHGLTLHSPIRAEKADELFGGGIKAWGCTGTPADCVKLALNELLDQKPDLILSGINHGPNLGTDIFCSGTVAAALEGTLDGIPSIAVSVASFQWKNFSFAGKLSLDIAEKAIQQNWPKNLLLNLNIPPCEEKEMGDLVWTRLSIRQYEEQFIRRVDPRGNTYFWMAGEAVTDLQSAGEGPKGWPSDVSQIAICSPSLTPIQPDLFWRGNLDDLPNLI</sequence>
<dbReference type="EC" id="3.1.3.5" evidence="1"/>
<dbReference type="EMBL" id="CP000553">
    <property type="protein sequence ID" value="ABM76246.1"/>
    <property type="molecule type" value="Genomic_DNA"/>
</dbReference>
<dbReference type="RefSeq" id="WP_011824251.1">
    <property type="nucleotide sequence ID" value="NC_008819.1"/>
</dbReference>
<dbReference type="SMR" id="A2C436"/>
<dbReference type="KEGG" id="pme:NATL1_16901"/>
<dbReference type="eggNOG" id="COG0496">
    <property type="taxonomic scope" value="Bacteria"/>
</dbReference>
<dbReference type="HOGENOM" id="CLU_045192_1_3_3"/>
<dbReference type="Proteomes" id="UP000002592">
    <property type="component" value="Chromosome"/>
</dbReference>
<dbReference type="GO" id="GO:0005737">
    <property type="term" value="C:cytoplasm"/>
    <property type="evidence" value="ECO:0007669"/>
    <property type="project" value="UniProtKB-SubCell"/>
</dbReference>
<dbReference type="GO" id="GO:0008254">
    <property type="term" value="F:3'-nucleotidase activity"/>
    <property type="evidence" value="ECO:0007669"/>
    <property type="project" value="TreeGrafter"/>
</dbReference>
<dbReference type="GO" id="GO:0008253">
    <property type="term" value="F:5'-nucleotidase activity"/>
    <property type="evidence" value="ECO:0007669"/>
    <property type="project" value="UniProtKB-UniRule"/>
</dbReference>
<dbReference type="GO" id="GO:0004309">
    <property type="term" value="F:exopolyphosphatase activity"/>
    <property type="evidence" value="ECO:0007669"/>
    <property type="project" value="TreeGrafter"/>
</dbReference>
<dbReference type="GO" id="GO:0046872">
    <property type="term" value="F:metal ion binding"/>
    <property type="evidence" value="ECO:0007669"/>
    <property type="project" value="UniProtKB-UniRule"/>
</dbReference>
<dbReference type="GO" id="GO:0000166">
    <property type="term" value="F:nucleotide binding"/>
    <property type="evidence" value="ECO:0007669"/>
    <property type="project" value="UniProtKB-KW"/>
</dbReference>
<dbReference type="Gene3D" id="3.40.1210.10">
    <property type="entry name" value="Survival protein SurE-like phosphatase/nucleotidase"/>
    <property type="match status" value="1"/>
</dbReference>
<dbReference type="HAMAP" id="MF_00060">
    <property type="entry name" value="SurE"/>
    <property type="match status" value="1"/>
</dbReference>
<dbReference type="InterPro" id="IPR030048">
    <property type="entry name" value="SurE"/>
</dbReference>
<dbReference type="InterPro" id="IPR002828">
    <property type="entry name" value="SurE-like_Pase/nucleotidase"/>
</dbReference>
<dbReference type="InterPro" id="IPR036523">
    <property type="entry name" value="SurE-like_sf"/>
</dbReference>
<dbReference type="NCBIfam" id="NF001490">
    <property type="entry name" value="PRK00346.1-4"/>
    <property type="match status" value="1"/>
</dbReference>
<dbReference type="NCBIfam" id="NF001492">
    <property type="entry name" value="PRK00346.2-2"/>
    <property type="match status" value="1"/>
</dbReference>
<dbReference type="NCBIfam" id="TIGR00087">
    <property type="entry name" value="surE"/>
    <property type="match status" value="1"/>
</dbReference>
<dbReference type="PANTHER" id="PTHR30457">
    <property type="entry name" value="5'-NUCLEOTIDASE SURE"/>
    <property type="match status" value="1"/>
</dbReference>
<dbReference type="PANTHER" id="PTHR30457:SF12">
    <property type="entry name" value="5'_3'-NUCLEOTIDASE SURE"/>
    <property type="match status" value="1"/>
</dbReference>
<dbReference type="Pfam" id="PF01975">
    <property type="entry name" value="SurE"/>
    <property type="match status" value="1"/>
</dbReference>
<dbReference type="SUPFAM" id="SSF64167">
    <property type="entry name" value="SurE-like"/>
    <property type="match status" value="1"/>
</dbReference>
<proteinExistence type="inferred from homology"/>
<organism>
    <name type="scientific">Prochlorococcus marinus (strain NATL1A)</name>
    <dbReference type="NCBI Taxonomy" id="167555"/>
    <lineage>
        <taxon>Bacteria</taxon>
        <taxon>Bacillati</taxon>
        <taxon>Cyanobacteriota</taxon>
        <taxon>Cyanophyceae</taxon>
        <taxon>Synechococcales</taxon>
        <taxon>Prochlorococcaceae</taxon>
        <taxon>Prochlorococcus</taxon>
    </lineage>
</organism>
<reference key="1">
    <citation type="journal article" date="2007" name="PLoS Genet.">
        <title>Patterns and implications of gene gain and loss in the evolution of Prochlorococcus.</title>
        <authorList>
            <person name="Kettler G.C."/>
            <person name="Martiny A.C."/>
            <person name="Huang K."/>
            <person name="Zucker J."/>
            <person name="Coleman M.L."/>
            <person name="Rodrigue S."/>
            <person name="Chen F."/>
            <person name="Lapidus A."/>
            <person name="Ferriera S."/>
            <person name="Johnson J."/>
            <person name="Steglich C."/>
            <person name="Church G.M."/>
            <person name="Richardson P."/>
            <person name="Chisholm S.W."/>
        </authorList>
    </citation>
    <scope>NUCLEOTIDE SEQUENCE [LARGE SCALE GENOMIC DNA]</scope>
    <source>
        <strain>NATL1A</strain>
    </source>
</reference>
<accession>A2C436</accession>
<keyword id="KW-0963">Cytoplasm</keyword>
<keyword id="KW-0378">Hydrolase</keyword>
<keyword id="KW-0479">Metal-binding</keyword>
<keyword id="KW-0547">Nucleotide-binding</keyword>
<name>SURE_PROM1</name>